<protein>
    <recommendedName>
        <fullName evidence="1">Small ribosomal subunit protein uS14</fullName>
    </recommendedName>
    <alternativeName>
        <fullName evidence="3">30S ribosomal protein S14</fullName>
    </alternativeName>
</protein>
<accession>Q3SSV3</accession>
<keyword id="KW-1185">Reference proteome</keyword>
<keyword id="KW-0687">Ribonucleoprotein</keyword>
<keyword id="KW-0689">Ribosomal protein</keyword>
<keyword id="KW-0694">RNA-binding</keyword>
<keyword id="KW-0699">rRNA-binding</keyword>
<feature type="chain" id="PRO_1000128469" description="Small ribosomal subunit protein uS14">
    <location>
        <begin position="1"/>
        <end position="101"/>
    </location>
</feature>
<feature type="region of interest" description="Disordered" evidence="2">
    <location>
        <begin position="1"/>
        <end position="23"/>
    </location>
</feature>
<feature type="compositionally biased region" description="Basic and acidic residues" evidence="2">
    <location>
        <begin position="1"/>
        <end position="10"/>
    </location>
</feature>
<feature type="compositionally biased region" description="Basic residues" evidence="2">
    <location>
        <begin position="11"/>
        <end position="23"/>
    </location>
</feature>
<sequence>MAKKSSIEKNNRRRRMNRNAAAKRARLKAIIGDKTKPMEERFAATLKLAEMPRNSSATRIRNRCELTGRPRSNYRKNKLSRIALRDLGSRGLVPGLVKSSW</sequence>
<evidence type="ECO:0000255" key="1">
    <source>
        <dbReference type="HAMAP-Rule" id="MF_00537"/>
    </source>
</evidence>
<evidence type="ECO:0000256" key="2">
    <source>
        <dbReference type="SAM" id="MobiDB-lite"/>
    </source>
</evidence>
<evidence type="ECO:0000305" key="3"/>
<reference key="1">
    <citation type="journal article" date="2006" name="Appl. Environ. Microbiol.">
        <title>Genome sequence of the chemolithoautotrophic nitrite-oxidizing bacterium Nitrobacter winogradskyi Nb-255.</title>
        <authorList>
            <person name="Starkenburg S.R."/>
            <person name="Chain P.S.G."/>
            <person name="Sayavedra-Soto L.A."/>
            <person name="Hauser L."/>
            <person name="Land M.L."/>
            <person name="Larimer F.W."/>
            <person name="Malfatti S.A."/>
            <person name="Klotz M.G."/>
            <person name="Bottomley P.J."/>
            <person name="Arp D.J."/>
            <person name="Hickey W.J."/>
        </authorList>
    </citation>
    <scope>NUCLEOTIDE SEQUENCE [LARGE SCALE GENOMIC DNA]</scope>
    <source>
        <strain>ATCC 25391 / DSM 10237 / CIP 104748 / NCIMB 11846 / Nb-255</strain>
    </source>
</reference>
<organism>
    <name type="scientific">Nitrobacter winogradskyi (strain ATCC 25391 / DSM 10237 / CIP 104748 / NCIMB 11846 / Nb-255)</name>
    <dbReference type="NCBI Taxonomy" id="323098"/>
    <lineage>
        <taxon>Bacteria</taxon>
        <taxon>Pseudomonadati</taxon>
        <taxon>Pseudomonadota</taxon>
        <taxon>Alphaproteobacteria</taxon>
        <taxon>Hyphomicrobiales</taxon>
        <taxon>Nitrobacteraceae</taxon>
        <taxon>Nitrobacter</taxon>
    </lineage>
</organism>
<name>RS14_NITWN</name>
<gene>
    <name evidence="1" type="primary">rpsN</name>
    <name type="ordered locus">Nwi_1377</name>
</gene>
<dbReference type="EMBL" id="CP000115">
    <property type="protein sequence ID" value="ABA04638.1"/>
    <property type="molecule type" value="Genomic_DNA"/>
</dbReference>
<dbReference type="RefSeq" id="WP_011314651.1">
    <property type="nucleotide sequence ID" value="NC_007406.1"/>
</dbReference>
<dbReference type="SMR" id="Q3SSV3"/>
<dbReference type="STRING" id="323098.Nwi_1377"/>
<dbReference type="KEGG" id="nwi:Nwi_1377"/>
<dbReference type="eggNOG" id="COG0199">
    <property type="taxonomic scope" value="Bacteria"/>
</dbReference>
<dbReference type="HOGENOM" id="CLU_139869_0_1_5"/>
<dbReference type="OrthoDB" id="9810484at2"/>
<dbReference type="Proteomes" id="UP000002531">
    <property type="component" value="Chromosome"/>
</dbReference>
<dbReference type="GO" id="GO:0005737">
    <property type="term" value="C:cytoplasm"/>
    <property type="evidence" value="ECO:0007669"/>
    <property type="project" value="UniProtKB-ARBA"/>
</dbReference>
<dbReference type="GO" id="GO:0015935">
    <property type="term" value="C:small ribosomal subunit"/>
    <property type="evidence" value="ECO:0007669"/>
    <property type="project" value="TreeGrafter"/>
</dbReference>
<dbReference type="GO" id="GO:0019843">
    <property type="term" value="F:rRNA binding"/>
    <property type="evidence" value="ECO:0007669"/>
    <property type="project" value="UniProtKB-UniRule"/>
</dbReference>
<dbReference type="GO" id="GO:0003735">
    <property type="term" value="F:structural constituent of ribosome"/>
    <property type="evidence" value="ECO:0007669"/>
    <property type="project" value="InterPro"/>
</dbReference>
<dbReference type="GO" id="GO:0006412">
    <property type="term" value="P:translation"/>
    <property type="evidence" value="ECO:0007669"/>
    <property type="project" value="UniProtKB-UniRule"/>
</dbReference>
<dbReference type="FunFam" id="1.10.287.1480:FF:000001">
    <property type="entry name" value="30S ribosomal protein S14"/>
    <property type="match status" value="1"/>
</dbReference>
<dbReference type="Gene3D" id="1.10.287.1480">
    <property type="match status" value="1"/>
</dbReference>
<dbReference type="HAMAP" id="MF_00537">
    <property type="entry name" value="Ribosomal_uS14_1"/>
    <property type="match status" value="1"/>
</dbReference>
<dbReference type="InterPro" id="IPR001209">
    <property type="entry name" value="Ribosomal_uS14"/>
</dbReference>
<dbReference type="InterPro" id="IPR023036">
    <property type="entry name" value="Ribosomal_uS14_bac/plastid"/>
</dbReference>
<dbReference type="NCBIfam" id="NF006477">
    <property type="entry name" value="PRK08881.1"/>
    <property type="match status" value="1"/>
</dbReference>
<dbReference type="PANTHER" id="PTHR19836">
    <property type="entry name" value="30S RIBOSOMAL PROTEIN S14"/>
    <property type="match status" value="1"/>
</dbReference>
<dbReference type="PANTHER" id="PTHR19836:SF19">
    <property type="entry name" value="SMALL RIBOSOMAL SUBUNIT PROTEIN US14M"/>
    <property type="match status" value="1"/>
</dbReference>
<dbReference type="Pfam" id="PF00253">
    <property type="entry name" value="Ribosomal_S14"/>
    <property type="match status" value="1"/>
</dbReference>
<dbReference type="SUPFAM" id="SSF57716">
    <property type="entry name" value="Glucocorticoid receptor-like (DNA-binding domain)"/>
    <property type="match status" value="1"/>
</dbReference>
<proteinExistence type="inferred from homology"/>
<comment type="function">
    <text evidence="1">Binds 16S rRNA, required for the assembly of 30S particles and may also be responsible for determining the conformation of the 16S rRNA at the A site.</text>
</comment>
<comment type="subunit">
    <text evidence="1">Part of the 30S ribosomal subunit. Contacts proteins S3 and S10.</text>
</comment>
<comment type="similarity">
    <text evidence="1">Belongs to the universal ribosomal protein uS14 family.</text>
</comment>